<accession>O96000</accession>
<accession>Q96II6</accession>
<comment type="function">
    <text evidence="2 3">Accessory subunit that is involved in the functional assembly of the mitochondrial respiratory chain complex I. Complex I has an NADH dehydrogenase activity with ubiquinone as an immediate electron acceptor and mediates the transfer of electrons from NADH to the respiratory chain.</text>
</comment>
<comment type="subunit">
    <text evidence="1 2 3">Complex I is composed of 45 different subunits (PubMed:12611891, PubMed:27626371, PubMed:28040730). Interacts with CHCHD4; assists NDUFB10 oxidation, folding and import into mitochondrion (PubMed:28040730).</text>
</comment>
<comment type="interaction">
    <interactant intactId="EBI-1246371">
        <id>O96000</id>
    </interactant>
    <interactant intactId="EBI-10175124">
        <id>Q8IZU0</id>
        <label>FAM9B</label>
    </interactant>
    <organismsDiffer>false</organismsDiffer>
    <experiments>6</experiments>
</comment>
<comment type="interaction">
    <interactant intactId="EBI-1246371">
        <id>O96000</id>
    </interactant>
    <interactant intactId="EBI-740220">
        <id>O14964</id>
        <label>HGS</label>
    </interactant>
    <organismsDiffer>false</organismsDiffer>
    <experiments>3</experiments>
</comment>
<comment type="interaction">
    <interactant intactId="EBI-1246371">
        <id>O96000</id>
    </interactant>
    <interactant intactId="EBI-466029">
        <id>P42858</id>
        <label>HTT</label>
    </interactant>
    <organismsDiffer>false</organismsDiffer>
    <experiments>13</experiments>
</comment>
<comment type="interaction">
    <interactant intactId="EBI-1246371">
        <id>O96000</id>
    </interactant>
    <interactant intactId="EBI-1055079">
        <id>O15160</id>
        <label>POLR1C</label>
    </interactant>
    <organismsDiffer>false</organismsDiffer>
    <experiments>3</experiments>
</comment>
<comment type="interaction">
    <interactant intactId="EBI-1246371">
        <id>O96000</id>
    </interactant>
    <interactant intactId="EBI-358037">
        <id>P05455</id>
        <label>SSB</label>
    </interactant>
    <organismsDiffer>false</organismsDiffer>
    <experiments>3</experiments>
</comment>
<comment type="interaction">
    <interactant intactId="EBI-1246371">
        <id>O96000</id>
    </interactant>
    <interactant intactId="EBI-21757569">
        <id>Q8NFB2</id>
        <label>TMEM185A</label>
    </interactant>
    <organismsDiffer>false</organismsDiffer>
    <experiments>3</experiments>
</comment>
<comment type="interaction">
    <interactant intactId="EBI-25930682">
        <id>O96000-2</id>
    </interactant>
    <interactant intactId="EBI-466029">
        <id>P42858</id>
        <label>HTT</label>
    </interactant>
    <organismsDiffer>false</organismsDiffer>
    <experiments>3</experiments>
</comment>
<comment type="interaction">
    <interactant intactId="EBI-25930682">
        <id>O96000-2</id>
    </interactant>
    <interactant intactId="EBI-5235340">
        <id>Q7Z699</id>
        <label>SPRED1</label>
    </interactant>
    <organismsDiffer>false</organismsDiffer>
    <experiments>3</experiments>
</comment>
<comment type="subcellular location">
    <subcellularLocation>
        <location evidence="3 6">Mitochondrion inner membrane</location>
        <topology evidence="5">Peripheral membrane protein</topology>
        <orientation evidence="5">Matrix side</orientation>
    </subcellularLocation>
</comment>
<comment type="alternative products">
    <event type="alternative splicing"/>
    <isoform>
        <id>O96000-1</id>
        <name>1</name>
        <sequence type="displayed"/>
    </isoform>
    <isoform>
        <id>O96000-2</id>
        <name>2</name>
        <sequence type="described" ref="VSP_056555"/>
    </isoform>
</comment>
<comment type="PTM">
    <text evidence="3">The formation of intramolecular disulfide bonds is assisted by CHCHD4 and ensures folding, import into the mitochondrion and is required for the function in mitochondrial respiratory chain complex I assembly.</text>
</comment>
<comment type="disease" evidence="3">
    <disease id="DI-05907">
        <name>Mitochondrial complex I deficiency, nuclear type 35</name>
        <acronym>MC1DN35</acronym>
        <description>A form of mitochondrial complex I deficiency, the most common biochemical signature of mitochondrial disorders, a group of highly heterogeneous conditions characterized by defective oxidative phosphorylation, which collectively affects 1 in 5-10000 live births. Clinical disorders have variable severity, ranging from lethal neonatal disease to adult-onset neurodegenerative disorders. Phenotypes include macrocephaly with progressive leukodystrophy, non-specific encephalopathy, cardiomyopathy, myopathy, liver disease, Leigh syndrome, Leber hereditary optic neuropathy, and some forms of Parkinson disease. MC1DN35 transmission pattern is consistent with autosomal recessive inheritance.</description>
        <dbReference type="MIM" id="619003"/>
    </disease>
    <text>The disease is caused by variants affecting the gene represented in this entry.</text>
</comment>
<comment type="similarity">
    <text evidence="5">Belongs to the complex I NDUFB10 subunit family.</text>
</comment>
<dbReference type="EMBL" id="AF044954">
    <property type="protein sequence ID" value="AAD05419.1"/>
    <property type="molecule type" value="mRNA"/>
</dbReference>
<dbReference type="EMBL" id="AF088995">
    <property type="protein sequence ID" value="AAD16091.1"/>
    <property type="molecule type" value="Genomic_DNA"/>
</dbReference>
<dbReference type="EMBL" id="AF088992">
    <property type="protein sequence ID" value="AAD16091.1"/>
    <property type="status" value="JOINED"/>
    <property type="molecule type" value="Genomic_DNA"/>
</dbReference>
<dbReference type="EMBL" id="AF088993">
    <property type="protein sequence ID" value="AAD16091.1"/>
    <property type="status" value="JOINED"/>
    <property type="molecule type" value="Genomic_DNA"/>
</dbReference>
<dbReference type="EMBL" id="AF088994">
    <property type="protein sequence ID" value="AAD16091.1"/>
    <property type="status" value="JOINED"/>
    <property type="molecule type" value="Genomic_DNA"/>
</dbReference>
<dbReference type="EMBL" id="AF088991">
    <property type="protein sequence ID" value="AAD08677.1"/>
    <property type="molecule type" value="mRNA"/>
</dbReference>
<dbReference type="EMBL" id="AF067169">
    <property type="protein sequence ID" value="AAD32453.1"/>
    <property type="molecule type" value="mRNA"/>
</dbReference>
<dbReference type="EMBL" id="AC005363">
    <property type="status" value="NOT_ANNOTATED_CDS"/>
    <property type="molecule type" value="Genomic_DNA"/>
</dbReference>
<dbReference type="EMBL" id="CH471112">
    <property type="protein sequence ID" value="EAW85597.1"/>
    <property type="molecule type" value="Genomic_DNA"/>
</dbReference>
<dbReference type="EMBL" id="BC007509">
    <property type="protein sequence ID" value="AAH07509.1"/>
    <property type="molecule type" value="mRNA"/>
</dbReference>
<dbReference type="EMBL" id="BC005829">
    <property type="protein sequence ID" value="AAH05829.1"/>
    <property type="molecule type" value="mRNA"/>
</dbReference>
<dbReference type="CCDS" id="CCDS10451.1">
    <molecule id="O96000-1"/>
</dbReference>
<dbReference type="PIR" id="JE0381">
    <property type="entry name" value="JE0381"/>
</dbReference>
<dbReference type="RefSeq" id="NP_004539.1">
    <molecule id="O96000-1"/>
    <property type="nucleotide sequence ID" value="NM_004548.3"/>
</dbReference>
<dbReference type="PDB" id="5XTC">
    <property type="method" value="EM"/>
    <property type="resolution" value="3.70 A"/>
    <property type="chains" value="d=1-171"/>
</dbReference>
<dbReference type="PDB" id="5XTD">
    <property type="method" value="EM"/>
    <property type="resolution" value="3.70 A"/>
    <property type="chains" value="d=1-171"/>
</dbReference>
<dbReference type="PDB" id="5XTH">
    <property type="method" value="EM"/>
    <property type="resolution" value="3.90 A"/>
    <property type="chains" value="d=1-171"/>
</dbReference>
<dbReference type="PDB" id="5XTI">
    <property type="method" value="EM"/>
    <property type="resolution" value="17.40 A"/>
    <property type="chains" value="Bd/d=1-171"/>
</dbReference>
<dbReference type="PDBsum" id="5XTC"/>
<dbReference type="PDBsum" id="5XTD"/>
<dbReference type="PDBsum" id="5XTH"/>
<dbReference type="PDBsum" id="5XTI"/>
<dbReference type="SMR" id="O96000"/>
<dbReference type="BioGRID" id="110796">
    <property type="interactions" value="144"/>
</dbReference>
<dbReference type="ComplexPortal" id="CPX-577">
    <property type="entry name" value="Mitochondrial respiratory chain complex I"/>
</dbReference>
<dbReference type="CORUM" id="O96000"/>
<dbReference type="DIP" id="DIP-38298N"/>
<dbReference type="FunCoup" id="O96000">
    <property type="interactions" value="823"/>
</dbReference>
<dbReference type="IntAct" id="O96000">
    <property type="interactions" value="61"/>
</dbReference>
<dbReference type="MINT" id="O96000"/>
<dbReference type="STRING" id="9606.ENSP00000268668"/>
<dbReference type="BindingDB" id="O96000"/>
<dbReference type="ChEMBL" id="CHEMBL2363065"/>
<dbReference type="DrugBank" id="DB00157">
    <property type="generic name" value="NADH"/>
</dbReference>
<dbReference type="DrugCentral" id="O96000"/>
<dbReference type="GlyGen" id="O96000">
    <property type="glycosylation" value="1 site, 1 O-linked glycan (1 site)"/>
</dbReference>
<dbReference type="iPTMnet" id="O96000"/>
<dbReference type="PhosphoSitePlus" id="O96000"/>
<dbReference type="SwissPalm" id="O96000"/>
<dbReference type="BioMuta" id="NDUFB10"/>
<dbReference type="jPOST" id="O96000"/>
<dbReference type="MassIVE" id="O96000"/>
<dbReference type="PaxDb" id="9606-ENSP00000268668"/>
<dbReference type="PeptideAtlas" id="O96000"/>
<dbReference type="ProteomicsDB" id="51179">
    <molecule id="O96000-1"/>
</dbReference>
<dbReference type="ProteomicsDB" id="76829"/>
<dbReference type="Pumba" id="O96000"/>
<dbReference type="TopDownProteomics" id="O96000-1">
    <molecule id="O96000-1"/>
</dbReference>
<dbReference type="Antibodypedia" id="23340">
    <property type="antibodies" value="347 antibodies from 31 providers"/>
</dbReference>
<dbReference type="DNASU" id="4716"/>
<dbReference type="Ensembl" id="ENST00000268668.11">
    <molecule id="O96000-1"/>
    <property type="protein sequence ID" value="ENSP00000268668.6"/>
    <property type="gene ID" value="ENSG00000140990.15"/>
</dbReference>
<dbReference type="Ensembl" id="ENST00000543683.6">
    <molecule id="O96000-2"/>
    <property type="protein sequence ID" value="ENSP00000445086.2"/>
    <property type="gene ID" value="ENSG00000140990.15"/>
</dbReference>
<dbReference type="Ensembl" id="ENST00000709233.1">
    <molecule id="O96000-1"/>
    <property type="protein sequence ID" value="ENSP00000517571.1"/>
    <property type="gene ID" value="ENSG00000291930.1"/>
</dbReference>
<dbReference type="Ensembl" id="ENST00000709234.1">
    <molecule id="O96000-2"/>
    <property type="protein sequence ID" value="ENSP00000517572.1"/>
    <property type="gene ID" value="ENSG00000291930.1"/>
</dbReference>
<dbReference type="GeneID" id="4716"/>
<dbReference type="KEGG" id="hsa:4716"/>
<dbReference type="MANE-Select" id="ENST00000268668.11">
    <property type="protein sequence ID" value="ENSP00000268668.6"/>
    <property type="RefSeq nucleotide sequence ID" value="NM_004548.3"/>
    <property type="RefSeq protein sequence ID" value="NP_004539.1"/>
</dbReference>
<dbReference type="UCSC" id="uc002cni.3">
    <molecule id="O96000-1"/>
    <property type="organism name" value="human"/>
</dbReference>
<dbReference type="AGR" id="HGNC:7696"/>
<dbReference type="CTD" id="4716"/>
<dbReference type="DisGeNET" id="4716"/>
<dbReference type="GeneCards" id="NDUFB10"/>
<dbReference type="HGNC" id="HGNC:7696">
    <property type="gene designation" value="NDUFB10"/>
</dbReference>
<dbReference type="HPA" id="ENSG00000140990">
    <property type="expression patterns" value="Group enriched (heart muscle, skeletal muscle, tongue)"/>
</dbReference>
<dbReference type="MalaCards" id="NDUFB10"/>
<dbReference type="MIM" id="603843">
    <property type="type" value="gene"/>
</dbReference>
<dbReference type="MIM" id="619003">
    <property type="type" value="phenotype"/>
</dbReference>
<dbReference type="neXtProt" id="NX_O96000"/>
<dbReference type="OpenTargets" id="ENSG00000140990"/>
<dbReference type="Orphanet" id="2609">
    <property type="disease" value="Isolated complex I deficiency"/>
</dbReference>
<dbReference type="PharmGKB" id="PA31502"/>
<dbReference type="VEuPathDB" id="HostDB:ENSG00000140990"/>
<dbReference type="eggNOG" id="KOG4009">
    <property type="taxonomic scope" value="Eukaryota"/>
</dbReference>
<dbReference type="GeneTree" id="ENSGT00390000006348"/>
<dbReference type="HOGENOM" id="CLU_112615_1_0_1"/>
<dbReference type="InParanoid" id="O96000"/>
<dbReference type="OMA" id="CKPILEQ"/>
<dbReference type="OrthoDB" id="6017729at2759"/>
<dbReference type="PAN-GO" id="O96000">
    <property type="GO annotations" value="1 GO annotation based on evolutionary models"/>
</dbReference>
<dbReference type="PhylomeDB" id="O96000"/>
<dbReference type="TreeFam" id="TF105792"/>
<dbReference type="BioCyc" id="MetaCyc:HS06786-MONOMER"/>
<dbReference type="PathwayCommons" id="O96000"/>
<dbReference type="Reactome" id="R-HSA-611105">
    <property type="pathway name" value="Respiratory electron transport"/>
</dbReference>
<dbReference type="Reactome" id="R-HSA-6799198">
    <property type="pathway name" value="Complex I biogenesis"/>
</dbReference>
<dbReference type="SignaLink" id="O96000"/>
<dbReference type="SIGNOR" id="O96000"/>
<dbReference type="BioGRID-ORCS" id="4716">
    <property type="hits" value="378 hits in 1183 CRISPR screens"/>
</dbReference>
<dbReference type="CD-CODE" id="FB4E32DD">
    <property type="entry name" value="Presynaptic clusters and postsynaptic densities"/>
</dbReference>
<dbReference type="ChiTaRS" id="NDUFB10">
    <property type="organism name" value="human"/>
</dbReference>
<dbReference type="GeneWiki" id="NDUFB10"/>
<dbReference type="GenomeRNAi" id="4716"/>
<dbReference type="Pharos" id="O96000">
    <property type="development level" value="Tclin"/>
</dbReference>
<dbReference type="PRO" id="PR:O96000"/>
<dbReference type="Proteomes" id="UP000005640">
    <property type="component" value="Chromosome 16"/>
</dbReference>
<dbReference type="RNAct" id="O96000">
    <property type="molecule type" value="protein"/>
</dbReference>
<dbReference type="Bgee" id="ENSG00000140990">
    <property type="expression patterns" value="Expressed in left ventricle myocardium and 181 other cell types or tissues"/>
</dbReference>
<dbReference type="ExpressionAtlas" id="O96000">
    <property type="expression patterns" value="baseline and differential"/>
</dbReference>
<dbReference type="GO" id="GO:0005743">
    <property type="term" value="C:mitochondrial inner membrane"/>
    <property type="evidence" value="ECO:0000314"/>
    <property type="project" value="ComplexPortal"/>
</dbReference>
<dbReference type="GO" id="GO:0005739">
    <property type="term" value="C:mitochondrion"/>
    <property type="evidence" value="ECO:0006056"/>
    <property type="project" value="FlyBase"/>
</dbReference>
<dbReference type="GO" id="GO:0045271">
    <property type="term" value="C:respiratory chain complex I"/>
    <property type="evidence" value="ECO:0000314"/>
    <property type="project" value="UniProtKB"/>
</dbReference>
<dbReference type="GO" id="GO:0008137">
    <property type="term" value="F:NADH dehydrogenase (ubiquinone) activity"/>
    <property type="evidence" value="ECO:0000303"/>
    <property type="project" value="UniProtKB"/>
</dbReference>
<dbReference type="GO" id="GO:0009060">
    <property type="term" value="P:aerobic respiration"/>
    <property type="evidence" value="ECO:0000303"/>
    <property type="project" value="ComplexPortal"/>
</dbReference>
<dbReference type="GO" id="GO:0006120">
    <property type="term" value="P:mitochondrial electron transport, NADH to ubiquinone"/>
    <property type="evidence" value="ECO:0000303"/>
    <property type="project" value="UniProtKB"/>
</dbReference>
<dbReference type="GO" id="GO:0042776">
    <property type="term" value="P:proton motive force-driven mitochondrial ATP synthesis"/>
    <property type="evidence" value="ECO:0000303"/>
    <property type="project" value="ComplexPortal"/>
</dbReference>
<dbReference type="InterPro" id="IPR019377">
    <property type="entry name" value="NADH_UbQ_OxRdtase_su10"/>
</dbReference>
<dbReference type="InterPro" id="IPR039993">
    <property type="entry name" value="NDUFB10"/>
</dbReference>
<dbReference type="PANTHER" id="PTHR13094:SF1">
    <property type="entry name" value="NADH DEHYDROGENASE [UBIQUINONE] 1 BETA SUBCOMPLEX SUBUNIT 10"/>
    <property type="match status" value="1"/>
</dbReference>
<dbReference type="PANTHER" id="PTHR13094">
    <property type="entry name" value="NADH-UBIQUINONE OXIDOREDUCTASE PDSW SUBUNIT"/>
    <property type="match status" value="1"/>
</dbReference>
<dbReference type="Pfam" id="PF10249">
    <property type="entry name" value="NDUFB10"/>
    <property type="match status" value="1"/>
</dbReference>
<sequence length="172" mass="20777">MPDSWDKDVYPEPPRRTPVQPNPIVYMMKAFDLIVDRPVTLVREFIERQHAKNRYYYYHRQYRRVPDITECKEEDIMCMYEAEMQWKRDYKVDQEIINIMQDRLKACQQREGQNYQQNCIKEVEQFTQVAKAYQDRYQDLGAYSSARKCLAKQRQRMLQERKAAKEAAAATS</sequence>
<feature type="chain" id="PRO_0000118830" description="NADH dehydrogenase [ubiquinone] 1 beta subcomplex subunit 10">
    <location>
        <begin position="1"/>
        <end position="172"/>
    </location>
</feature>
<feature type="modified residue" description="Phosphoserine" evidence="7">
    <location>
        <position position="145"/>
    </location>
</feature>
<feature type="splice variant" id="VSP_056555" description="In isoform 2." evidence="4">
    <original>YQDLGAYSSARKCLAKQRQRMLQERKAAKEAAAATS</original>
    <variation>CACPTHPQPPTILLRPGGQNHCKSSLPSLVLT</variation>
    <location>
        <begin position="137"/>
        <end position="172"/>
    </location>
</feature>
<feature type="sequence variant" id="VAR_084767" description="In MC1DN35; decreased protein abundance; decreased CHCHD4-mediated oxidation; loss of mitochondrial localization; retained in the cytosol; loss of function in mitochondrial respiratory chain complex I assembly." evidence="3">
    <original>C</original>
    <variation>S</variation>
    <location>
        <position position="107"/>
    </location>
</feature>
<protein>
    <recommendedName>
        <fullName>NADH dehydrogenase [ubiquinone] 1 beta subcomplex subunit 10</fullName>
    </recommendedName>
    <alternativeName>
        <fullName>Complex I-PDSW</fullName>
        <shortName>CI-PDSW</shortName>
    </alternativeName>
    <alternativeName>
        <fullName>NADH-ubiquinone oxidoreductase PDSW subunit</fullName>
    </alternativeName>
</protein>
<proteinExistence type="evidence at protein level"/>
<keyword id="KW-0002">3D-structure</keyword>
<keyword id="KW-0025">Alternative splicing</keyword>
<keyword id="KW-0225">Disease variant</keyword>
<keyword id="KW-0249">Electron transport</keyword>
<keyword id="KW-0472">Membrane</keyword>
<keyword id="KW-0496">Mitochondrion</keyword>
<keyword id="KW-0999">Mitochondrion inner membrane</keyword>
<keyword id="KW-0597">Phosphoprotein</keyword>
<keyword id="KW-1274">Primary mitochondrial disease</keyword>
<keyword id="KW-1267">Proteomics identification</keyword>
<keyword id="KW-1185">Reference proteome</keyword>
<keyword id="KW-0679">Respiratory chain</keyword>
<keyword id="KW-0813">Transport</keyword>
<organism>
    <name type="scientific">Homo sapiens</name>
    <name type="common">Human</name>
    <dbReference type="NCBI Taxonomy" id="9606"/>
    <lineage>
        <taxon>Eukaryota</taxon>
        <taxon>Metazoa</taxon>
        <taxon>Chordata</taxon>
        <taxon>Craniata</taxon>
        <taxon>Vertebrata</taxon>
        <taxon>Euteleostomi</taxon>
        <taxon>Mammalia</taxon>
        <taxon>Eutheria</taxon>
        <taxon>Euarchontoglires</taxon>
        <taxon>Primates</taxon>
        <taxon>Haplorrhini</taxon>
        <taxon>Catarrhini</taxon>
        <taxon>Hominidae</taxon>
        <taxon>Homo</taxon>
    </lineage>
</organism>
<reference key="1">
    <citation type="journal article" date="1998" name="Biochem. Biophys. Res. Commun.">
        <title>cDNA of eight nuclear encoded subunits of NADH:ubiquinone oxidoreductase: human complex I cDNA characterization completed.</title>
        <authorList>
            <person name="Loeffen J.L.C.M."/>
            <person name="Triepels R.H."/>
            <person name="van den Heuvel L.P."/>
            <person name="Schuelke M."/>
            <person name="Buskens C.A.F."/>
            <person name="Smeets R.J.P."/>
            <person name="Trijbels J.M.F."/>
            <person name="Smeitink J.A.M."/>
        </authorList>
    </citation>
    <scope>NUCLEOTIDE SEQUENCE [MRNA] (ISOFORM 1)</scope>
</reference>
<reference key="2">
    <citation type="submission" date="1998-08" db="EMBL/GenBank/DDBJ databases">
        <title>One subunit of human NADH-ubiquinone oxidoreductase, hPDSW, located at 16p13.3 and down-regulated in a prostate cell line.</title>
        <authorList>
            <person name="Wang L."/>
            <person name="Zhang J."/>
            <person name="Smith D.I."/>
        </authorList>
    </citation>
    <scope>NUCLEOTIDE SEQUENCE [GENOMIC DNA]</scope>
</reference>
<reference key="3">
    <citation type="journal article" date="2000" name="Genome Res.">
        <title>Cloning and functional analysis of cDNAs with open reading frames for 300 previously undefined genes expressed in CD34+ hematopoietic stem/progenitor cells.</title>
        <authorList>
            <person name="Zhang Q.-H."/>
            <person name="Ye M."/>
            <person name="Wu X.-Y."/>
            <person name="Ren S.-X."/>
            <person name="Zhao M."/>
            <person name="Zhao C.-J."/>
            <person name="Fu G."/>
            <person name="Shen Y."/>
            <person name="Fan H.-Y."/>
            <person name="Lu G."/>
            <person name="Zhong M."/>
            <person name="Xu X.-R."/>
            <person name="Han Z.-G."/>
            <person name="Zhang J.-W."/>
            <person name="Tao J."/>
            <person name="Huang Q.-H."/>
            <person name="Zhou J."/>
            <person name="Hu G.-X."/>
            <person name="Gu J."/>
            <person name="Chen S.-J."/>
            <person name="Chen Z."/>
        </authorList>
    </citation>
    <scope>NUCLEOTIDE SEQUENCE [LARGE SCALE MRNA] (ISOFORM 1)</scope>
    <source>
        <tissue>Umbilical cord blood</tissue>
    </source>
</reference>
<reference key="4">
    <citation type="journal article" date="2004" name="Nature">
        <title>The sequence and analysis of duplication-rich human chromosome 16.</title>
        <authorList>
            <person name="Martin J."/>
            <person name="Han C."/>
            <person name="Gordon L.A."/>
            <person name="Terry A."/>
            <person name="Prabhakar S."/>
            <person name="She X."/>
            <person name="Xie G."/>
            <person name="Hellsten U."/>
            <person name="Chan Y.M."/>
            <person name="Altherr M."/>
            <person name="Couronne O."/>
            <person name="Aerts A."/>
            <person name="Bajorek E."/>
            <person name="Black S."/>
            <person name="Blumer H."/>
            <person name="Branscomb E."/>
            <person name="Brown N.C."/>
            <person name="Bruno W.J."/>
            <person name="Buckingham J.M."/>
            <person name="Callen D.F."/>
            <person name="Campbell C.S."/>
            <person name="Campbell M.L."/>
            <person name="Campbell E.W."/>
            <person name="Caoile C."/>
            <person name="Challacombe J.F."/>
            <person name="Chasteen L.A."/>
            <person name="Chertkov O."/>
            <person name="Chi H.C."/>
            <person name="Christensen M."/>
            <person name="Clark L.M."/>
            <person name="Cohn J.D."/>
            <person name="Denys M."/>
            <person name="Detter J.C."/>
            <person name="Dickson M."/>
            <person name="Dimitrijevic-Bussod M."/>
            <person name="Escobar J."/>
            <person name="Fawcett J.J."/>
            <person name="Flowers D."/>
            <person name="Fotopulos D."/>
            <person name="Glavina T."/>
            <person name="Gomez M."/>
            <person name="Gonzales E."/>
            <person name="Goodstein D."/>
            <person name="Goodwin L.A."/>
            <person name="Grady D.L."/>
            <person name="Grigoriev I."/>
            <person name="Groza M."/>
            <person name="Hammon N."/>
            <person name="Hawkins T."/>
            <person name="Haydu L."/>
            <person name="Hildebrand C.E."/>
            <person name="Huang W."/>
            <person name="Israni S."/>
            <person name="Jett J."/>
            <person name="Jewett P.B."/>
            <person name="Kadner K."/>
            <person name="Kimball H."/>
            <person name="Kobayashi A."/>
            <person name="Krawczyk M.-C."/>
            <person name="Leyba T."/>
            <person name="Longmire J.L."/>
            <person name="Lopez F."/>
            <person name="Lou Y."/>
            <person name="Lowry S."/>
            <person name="Ludeman T."/>
            <person name="Manohar C.F."/>
            <person name="Mark G.A."/>
            <person name="McMurray K.L."/>
            <person name="Meincke L.J."/>
            <person name="Morgan J."/>
            <person name="Moyzis R.K."/>
            <person name="Mundt M.O."/>
            <person name="Munk A.C."/>
            <person name="Nandkeshwar R.D."/>
            <person name="Pitluck S."/>
            <person name="Pollard M."/>
            <person name="Predki P."/>
            <person name="Parson-Quintana B."/>
            <person name="Ramirez L."/>
            <person name="Rash S."/>
            <person name="Retterer J."/>
            <person name="Ricke D.O."/>
            <person name="Robinson D.L."/>
            <person name="Rodriguez A."/>
            <person name="Salamov A."/>
            <person name="Saunders E.H."/>
            <person name="Scott D."/>
            <person name="Shough T."/>
            <person name="Stallings R.L."/>
            <person name="Stalvey M."/>
            <person name="Sutherland R.D."/>
            <person name="Tapia R."/>
            <person name="Tesmer J.G."/>
            <person name="Thayer N."/>
            <person name="Thompson L.S."/>
            <person name="Tice H."/>
            <person name="Torney D.C."/>
            <person name="Tran-Gyamfi M."/>
            <person name="Tsai M."/>
            <person name="Ulanovsky L.E."/>
            <person name="Ustaszewska A."/>
            <person name="Vo N."/>
            <person name="White P.S."/>
            <person name="Williams A.L."/>
            <person name="Wills P.L."/>
            <person name="Wu J.-R."/>
            <person name="Wu K."/>
            <person name="Yang J."/>
            <person name="DeJong P."/>
            <person name="Bruce D."/>
            <person name="Doggett N.A."/>
            <person name="Deaven L."/>
            <person name="Schmutz J."/>
            <person name="Grimwood J."/>
            <person name="Richardson P."/>
            <person name="Rokhsar D.S."/>
            <person name="Eichler E.E."/>
            <person name="Gilna P."/>
            <person name="Lucas S.M."/>
            <person name="Myers R.M."/>
            <person name="Rubin E.M."/>
            <person name="Pennacchio L.A."/>
        </authorList>
    </citation>
    <scope>NUCLEOTIDE SEQUENCE [LARGE SCALE GENOMIC DNA]</scope>
</reference>
<reference key="5">
    <citation type="submission" date="2005-09" db="EMBL/GenBank/DDBJ databases">
        <authorList>
            <person name="Mural R.J."/>
            <person name="Istrail S."/>
            <person name="Sutton G."/>
            <person name="Florea L."/>
            <person name="Halpern A.L."/>
            <person name="Mobarry C.M."/>
            <person name="Lippert R."/>
            <person name="Walenz B."/>
            <person name="Shatkay H."/>
            <person name="Dew I."/>
            <person name="Miller J.R."/>
            <person name="Flanigan M.J."/>
            <person name="Edwards N.J."/>
            <person name="Bolanos R."/>
            <person name="Fasulo D."/>
            <person name="Halldorsson B.V."/>
            <person name="Hannenhalli S."/>
            <person name="Turner R."/>
            <person name="Yooseph S."/>
            <person name="Lu F."/>
            <person name="Nusskern D.R."/>
            <person name="Shue B.C."/>
            <person name="Zheng X.H."/>
            <person name="Zhong F."/>
            <person name="Delcher A.L."/>
            <person name="Huson D.H."/>
            <person name="Kravitz S.A."/>
            <person name="Mouchard L."/>
            <person name="Reinert K."/>
            <person name="Remington K.A."/>
            <person name="Clark A.G."/>
            <person name="Waterman M.S."/>
            <person name="Eichler E.E."/>
            <person name="Adams M.D."/>
            <person name="Hunkapiller M.W."/>
            <person name="Myers E.W."/>
            <person name="Venter J.C."/>
        </authorList>
    </citation>
    <scope>NUCLEOTIDE SEQUENCE [LARGE SCALE GENOMIC DNA]</scope>
</reference>
<reference key="6">
    <citation type="journal article" date="2004" name="Genome Res.">
        <title>The status, quality, and expansion of the NIH full-length cDNA project: the Mammalian Gene Collection (MGC).</title>
        <authorList>
            <consortium name="The MGC Project Team"/>
        </authorList>
    </citation>
    <scope>NUCLEOTIDE SEQUENCE [LARGE SCALE MRNA] (ISOFORMS 1 AND 2)</scope>
    <source>
        <tissue>Ovary</tissue>
        <tissue>Skin</tissue>
    </source>
</reference>
<reference key="7">
    <citation type="journal article" date="2003" name="J. Biol. Chem.">
        <title>The subunit composition of the human NADH dehydrogenase obtained by rapid one-step immunopurification.</title>
        <authorList>
            <person name="Murray J."/>
            <person name="Zhang B."/>
            <person name="Taylor S.W."/>
            <person name="Oglesbee D."/>
            <person name="Fahy E."/>
            <person name="Marusich M.F."/>
            <person name="Ghosh S.S."/>
            <person name="Capaldi R.A."/>
        </authorList>
    </citation>
    <scope>IDENTIFICATION IN THE NADH-UBIQUINONE OXIDOREDUCTASE COMPLEX</scope>
    <scope>IDENTIFICATION BY MASS SPECTROMETRY</scope>
    <scope>SUBCELLULAR LOCATION</scope>
</reference>
<reference key="8">
    <citation type="journal article" date="2011" name="BMC Syst. Biol.">
        <title>Initial characterization of the human central proteome.</title>
        <authorList>
            <person name="Burkard T.R."/>
            <person name="Planyavsky M."/>
            <person name="Kaupe I."/>
            <person name="Breitwieser F.P."/>
            <person name="Buerckstuemmer T."/>
            <person name="Bennett K.L."/>
            <person name="Superti-Furga G."/>
            <person name="Colinge J."/>
        </authorList>
    </citation>
    <scope>IDENTIFICATION BY MASS SPECTROMETRY [LARGE SCALE ANALYSIS]</scope>
</reference>
<reference key="9">
    <citation type="journal article" date="2013" name="J. Proteome Res.">
        <title>Toward a comprehensive characterization of a human cancer cell phosphoproteome.</title>
        <authorList>
            <person name="Zhou H."/>
            <person name="Di Palma S."/>
            <person name="Preisinger C."/>
            <person name="Peng M."/>
            <person name="Polat A.N."/>
            <person name="Heck A.J."/>
            <person name="Mohammed S."/>
        </authorList>
    </citation>
    <scope>PHOSPHORYLATION [LARGE SCALE ANALYSIS] AT SER-145</scope>
    <scope>IDENTIFICATION BY MASS SPECTROMETRY [LARGE SCALE ANALYSIS]</scope>
    <source>
        <tissue>Cervix carcinoma</tissue>
        <tissue>Erythroleukemia</tissue>
    </source>
</reference>
<reference key="10">
    <citation type="journal article" date="2014" name="J. Proteomics">
        <title>An enzyme assisted RP-RPLC approach for in-depth analysis of human liver phosphoproteome.</title>
        <authorList>
            <person name="Bian Y."/>
            <person name="Song C."/>
            <person name="Cheng K."/>
            <person name="Dong M."/>
            <person name="Wang F."/>
            <person name="Huang J."/>
            <person name="Sun D."/>
            <person name="Wang L."/>
            <person name="Ye M."/>
            <person name="Zou H."/>
        </authorList>
    </citation>
    <scope>IDENTIFICATION BY MASS SPECTROMETRY [LARGE SCALE ANALYSIS]</scope>
    <source>
        <tissue>Liver</tissue>
    </source>
</reference>
<reference key="11">
    <citation type="journal article" date="2015" name="Proteomics">
        <title>N-terminome analysis of the human mitochondrial proteome.</title>
        <authorList>
            <person name="Vaca Jacome A.S."/>
            <person name="Rabilloud T."/>
            <person name="Schaeffer-Reiss C."/>
            <person name="Rompais M."/>
            <person name="Ayoub D."/>
            <person name="Lane L."/>
            <person name="Bairoch A."/>
            <person name="Van Dorsselaer A."/>
            <person name="Carapito C."/>
        </authorList>
    </citation>
    <scope>IDENTIFICATION BY MASS SPECTROMETRY [LARGE SCALE ANALYSIS]</scope>
</reference>
<reference key="12">
    <citation type="journal article" date="2016" name="Nature">
        <title>Accessory subunits are integral for assembly and function of human mitochondrial complex I.</title>
        <authorList>
            <person name="Stroud D.A."/>
            <person name="Surgenor E.E."/>
            <person name="Formosa L.E."/>
            <person name="Reljic B."/>
            <person name="Frazier A.E."/>
            <person name="Dibley M.G."/>
            <person name="Osellame L.D."/>
            <person name="Stait T."/>
            <person name="Beilharz T.H."/>
            <person name="Thorburn D.R."/>
            <person name="Salim A."/>
            <person name="Ryan M.T."/>
        </authorList>
    </citation>
    <scope>FUNCTION</scope>
    <scope>IDENTIFICATION IN THE NADH-UBIQUINONE OXIDOREDUCTASE COMPLEX</scope>
</reference>
<reference key="13">
    <citation type="journal article" date="2017" name="Hum. Mol. Genet.">
        <title>Mutations in the accessory subunit NDUFB10 result in isolated complex I deficiency and illustrate the critical role of intermembrane space import for complex I holoenzyme assembly.</title>
        <authorList>
            <person name="Friederich M.W."/>
            <person name="Erdogan A.J."/>
            <person name="Coughlin C.R. II"/>
            <person name="Elos M.T."/>
            <person name="Jiang H."/>
            <person name="O'Rourke C.P."/>
            <person name="Lovell M.A."/>
            <person name="Wartchow E."/>
            <person name="Gowan K."/>
            <person name="Chatfield K.C."/>
            <person name="Chick W.S."/>
            <person name="Spector E.B."/>
            <person name="Van Hove J.L.K."/>
            <person name="Riemer J."/>
        </authorList>
    </citation>
    <scope>FUNCTION</scope>
    <scope>SUBCELLULAR LOCATION</scope>
    <scope>INTERACTION WITH CHCHD4</scope>
    <scope>DISULFIDE BOND</scope>
    <scope>INVOLVEMENT IN MC1DN35</scope>
    <scope>VARIANT MC1DN35 SER-107</scope>
    <scope>CHARACTERIZATION OF VARIANT MC1DN35 SER-107</scope>
</reference>
<name>NDUBA_HUMAN</name>
<evidence type="ECO:0000269" key="1">
    <source>
    </source>
</evidence>
<evidence type="ECO:0000269" key="2">
    <source>
    </source>
</evidence>
<evidence type="ECO:0000269" key="3">
    <source>
    </source>
</evidence>
<evidence type="ECO:0000303" key="4">
    <source>
    </source>
</evidence>
<evidence type="ECO:0000305" key="5"/>
<evidence type="ECO:0000305" key="6">
    <source>
    </source>
</evidence>
<evidence type="ECO:0007744" key="7">
    <source>
    </source>
</evidence>
<gene>
    <name type="primary">NDUFB10</name>
</gene>